<dbReference type="EMBL" id="CP001399">
    <property type="protein sequence ID" value="ACP36198.1"/>
    <property type="molecule type" value="Genomic_DNA"/>
</dbReference>
<dbReference type="RefSeq" id="WP_012712013.1">
    <property type="nucleotide sequence ID" value="NC_012589.1"/>
</dbReference>
<dbReference type="SMR" id="C3MJP5"/>
<dbReference type="KEGG" id="sis:LS215_2211"/>
<dbReference type="HOGENOM" id="CLU_089738_1_1_2"/>
<dbReference type="OrthoDB" id="10429at2157"/>
<dbReference type="Proteomes" id="UP000001747">
    <property type="component" value="Chromosome"/>
</dbReference>
<dbReference type="GO" id="GO:0015935">
    <property type="term" value="C:small ribosomal subunit"/>
    <property type="evidence" value="ECO:0007669"/>
    <property type="project" value="InterPro"/>
</dbReference>
<dbReference type="GO" id="GO:0019843">
    <property type="term" value="F:rRNA binding"/>
    <property type="evidence" value="ECO:0007669"/>
    <property type="project" value="UniProtKB-UniRule"/>
</dbReference>
<dbReference type="GO" id="GO:0003735">
    <property type="term" value="F:structural constituent of ribosome"/>
    <property type="evidence" value="ECO:0007669"/>
    <property type="project" value="InterPro"/>
</dbReference>
<dbReference type="GO" id="GO:0042274">
    <property type="term" value="P:ribosomal small subunit biogenesis"/>
    <property type="evidence" value="ECO:0007669"/>
    <property type="project" value="TreeGrafter"/>
</dbReference>
<dbReference type="GO" id="GO:0006412">
    <property type="term" value="P:translation"/>
    <property type="evidence" value="ECO:0007669"/>
    <property type="project" value="UniProtKB-UniRule"/>
</dbReference>
<dbReference type="CDD" id="cd00165">
    <property type="entry name" value="S4"/>
    <property type="match status" value="1"/>
</dbReference>
<dbReference type="FunFam" id="3.10.290.10:FF:000026">
    <property type="entry name" value="30S ribosomal protein S4"/>
    <property type="match status" value="1"/>
</dbReference>
<dbReference type="Gene3D" id="3.10.290.10">
    <property type="entry name" value="RNA-binding S4 domain"/>
    <property type="match status" value="1"/>
</dbReference>
<dbReference type="HAMAP" id="MF_01306_A">
    <property type="entry name" value="Ribosomal_uS4_A"/>
    <property type="match status" value="1"/>
</dbReference>
<dbReference type="InterPro" id="IPR022801">
    <property type="entry name" value="Ribosomal_uS4"/>
</dbReference>
<dbReference type="InterPro" id="IPR022802">
    <property type="entry name" value="Ribosomal_uS4_arc"/>
</dbReference>
<dbReference type="InterPro" id="IPR018079">
    <property type="entry name" value="Ribosomal_uS4_CS"/>
</dbReference>
<dbReference type="InterPro" id="IPR005710">
    <property type="entry name" value="Ribosomal_uS4_euk/arc"/>
</dbReference>
<dbReference type="InterPro" id="IPR001912">
    <property type="entry name" value="Ribosomal_uS4_N"/>
</dbReference>
<dbReference type="InterPro" id="IPR002942">
    <property type="entry name" value="S4_RNA-bd"/>
</dbReference>
<dbReference type="InterPro" id="IPR036986">
    <property type="entry name" value="S4_RNA-bd_sf"/>
</dbReference>
<dbReference type="NCBIfam" id="NF003139">
    <property type="entry name" value="PRK04051.1"/>
    <property type="match status" value="1"/>
</dbReference>
<dbReference type="NCBIfam" id="TIGR01018">
    <property type="entry name" value="uS4_arch"/>
    <property type="match status" value="1"/>
</dbReference>
<dbReference type="PANTHER" id="PTHR11831">
    <property type="entry name" value="30S 40S RIBOSOMAL PROTEIN"/>
    <property type="match status" value="1"/>
</dbReference>
<dbReference type="PANTHER" id="PTHR11831:SF5">
    <property type="entry name" value="40S RIBOSOMAL PROTEIN S9"/>
    <property type="match status" value="1"/>
</dbReference>
<dbReference type="Pfam" id="PF00163">
    <property type="entry name" value="Ribosomal_S4"/>
    <property type="match status" value="1"/>
</dbReference>
<dbReference type="Pfam" id="PF01479">
    <property type="entry name" value="S4"/>
    <property type="match status" value="1"/>
</dbReference>
<dbReference type="SMART" id="SM01390">
    <property type="entry name" value="Ribosomal_S4"/>
    <property type="match status" value="1"/>
</dbReference>
<dbReference type="SMART" id="SM00363">
    <property type="entry name" value="S4"/>
    <property type="match status" value="1"/>
</dbReference>
<dbReference type="SUPFAM" id="SSF55174">
    <property type="entry name" value="Alpha-L RNA-binding motif"/>
    <property type="match status" value="1"/>
</dbReference>
<dbReference type="PROSITE" id="PS00632">
    <property type="entry name" value="RIBOSOMAL_S4"/>
    <property type="match status" value="1"/>
</dbReference>
<dbReference type="PROSITE" id="PS50889">
    <property type="entry name" value="S4"/>
    <property type="match status" value="1"/>
</dbReference>
<keyword id="KW-0687">Ribonucleoprotein</keyword>
<keyword id="KW-0689">Ribosomal protein</keyword>
<keyword id="KW-0694">RNA-binding</keyword>
<keyword id="KW-0699">rRNA-binding</keyword>
<reference key="1">
    <citation type="journal article" date="2009" name="Proc. Natl. Acad. Sci. U.S.A.">
        <title>Biogeography of the Sulfolobus islandicus pan-genome.</title>
        <authorList>
            <person name="Reno M.L."/>
            <person name="Held N.L."/>
            <person name="Fields C.J."/>
            <person name="Burke P.V."/>
            <person name="Whitaker R.J."/>
        </authorList>
    </citation>
    <scope>NUCLEOTIDE SEQUENCE [LARGE SCALE GENOMIC DNA]</scope>
    <source>
        <strain>L.S.2.15 / Lassen #1</strain>
    </source>
</reference>
<proteinExistence type="inferred from homology"/>
<feature type="chain" id="PRO_1000214305" description="Small ribosomal subunit protein uS4">
    <location>
        <begin position="1"/>
        <end position="181"/>
    </location>
</feature>
<feature type="domain" description="S4 RNA-binding" evidence="1">
    <location>
        <begin position="104"/>
        <end position="166"/>
    </location>
</feature>
<sequence>MGDPKKSRKKWESPGHPWIKERIGYEQELLGKYGLRNKREIWIAQSIIRKFRHQARSLLALPPAERAVREKQLVGKLLKMGLLKRETATVDDILSLTEQDLLERRLQTIVYKKGLANTTYQARQLIIHGHIAVNGKRVTSPGYIVNVDEENLIDYYVTSSFKSRPPVMAQQEGGEAGVKQA</sequence>
<gene>
    <name evidence="1" type="primary">rps4</name>
    <name type="ordered locus">LS215_2211</name>
</gene>
<evidence type="ECO:0000255" key="1">
    <source>
        <dbReference type="HAMAP-Rule" id="MF_01306"/>
    </source>
</evidence>
<evidence type="ECO:0000305" key="2"/>
<organism>
    <name type="scientific">Saccharolobus islandicus (strain L.S.2.15 / Lassen #1)</name>
    <name type="common">Sulfolobus islandicus</name>
    <dbReference type="NCBI Taxonomy" id="429572"/>
    <lineage>
        <taxon>Archaea</taxon>
        <taxon>Thermoproteota</taxon>
        <taxon>Thermoprotei</taxon>
        <taxon>Sulfolobales</taxon>
        <taxon>Sulfolobaceae</taxon>
        <taxon>Saccharolobus</taxon>
    </lineage>
</organism>
<name>RS4_SACI2</name>
<comment type="function">
    <text evidence="1">One of the primary rRNA binding proteins, it binds directly to 16S rRNA where it nucleates assembly of the body of the 30S subunit.</text>
</comment>
<comment type="function">
    <text evidence="1">With S5 and S12 plays an important role in translational accuracy.</text>
</comment>
<comment type="subunit">
    <text evidence="1">Part of the 30S ribosomal subunit. Contacts protein S5. The interaction surface between S4 and S5 is involved in control of translational fidelity.</text>
</comment>
<comment type="similarity">
    <text evidence="1">Belongs to the universal ribosomal protein uS4 family.</text>
</comment>
<accession>C3MJP5</accession>
<protein>
    <recommendedName>
        <fullName evidence="1">Small ribosomal subunit protein uS4</fullName>
    </recommendedName>
    <alternativeName>
        <fullName evidence="2">30S ribosomal protein S4</fullName>
    </alternativeName>
</protein>